<gene>
    <name evidence="1" type="primary">rplF</name>
    <name type="ordered locus">MS2033</name>
</gene>
<proteinExistence type="inferred from homology"/>
<sequence length="177" mass="18981">MSRVAKAPVSVPAGVEVKLDGQLLTVKGKNGELTRTIHNFVEVKQDNNELTFSPRNDGAEANAQAGTTRALVNAMVIGVTEGFTKKLQLVGVGYRAQVKGNVVNLSLGFSHPVEHTLPAGITAECPSQTEIVLKGADKQLIGQVAADIRAYRSPEPYKGKGVRYSDEVVRTKEAKKK</sequence>
<keyword id="KW-0687">Ribonucleoprotein</keyword>
<keyword id="KW-0689">Ribosomal protein</keyword>
<keyword id="KW-0694">RNA-binding</keyword>
<keyword id="KW-0699">rRNA-binding</keyword>
<evidence type="ECO:0000255" key="1">
    <source>
        <dbReference type="HAMAP-Rule" id="MF_01365"/>
    </source>
</evidence>
<evidence type="ECO:0000305" key="2"/>
<comment type="function">
    <text evidence="1">This protein binds to the 23S rRNA, and is important in its secondary structure. It is located near the subunit interface in the base of the L7/L12 stalk, and near the tRNA binding site of the peptidyltransferase center.</text>
</comment>
<comment type="subunit">
    <text evidence="1">Part of the 50S ribosomal subunit.</text>
</comment>
<comment type="similarity">
    <text evidence="1">Belongs to the universal ribosomal protein uL6 family.</text>
</comment>
<organism>
    <name type="scientific">Mannheimia succiniciproducens (strain KCTC 0769BP / MBEL55E)</name>
    <dbReference type="NCBI Taxonomy" id="221988"/>
    <lineage>
        <taxon>Bacteria</taxon>
        <taxon>Pseudomonadati</taxon>
        <taxon>Pseudomonadota</taxon>
        <taxon>Gammaproteobacteria</taxon>
        <taxon>Pasteurellales</taxon>
        <taxon>Pasteurellaceae</taxon>
        <taxon>Basfia</taxon>
    </lineage>
</organism>
<dbReference type="EMBL" id="AE016827">
    <property type="protein sequence ID" value="AAU38640.1"/>
    <property type="molecule type" value="Genomic_DNA"/>
</dbReference>
<dbReference type="RefSeq" id="WP_011201191.1">
    <property type="nucleotide sequence ID" value="NC_006300.1"/>
</dbReference>
<dbReference type="SMR" id="Q65QX0"/>
<dbReference type="STRING" id="221988.MS2033"/>
<dbReference type="KEGG" id="msu:MS2033"/>
<dbReference type="eggNOG" id="COG0097">
    <property type="taxonomic scope" value="Bacteria"/>
</dbReference>
<dbReference type="HOGENOM" id="CLU_065464_1_2_6"/>
<dbReference type="OrthoDB" id="9805007at2"/>
<dbReference type="Proteomes" id="UP000000607">
    <property type="component" value="Chromosome"/>
</dbReference>
<dbReference type="GO" id="GO:0022625">
    <property type="term" value="C:cytosolic large ribosomal subunit"/>
    <property type="evidence" value="ECO:0007669"/>
    <property type="project" value="TreeGrafter"/>
</dbReference>
<dbReference type="GO" id="GO:0019843">
    <property type="term" value="F:rRNA binding"/>
    <property type="evidence" value="ECO:0007669"/>
    <property type="project" value="UniProtKB-UniRule"/>
</dbReference>
<dbReference type="GO" id="GO:0003735">
    <property type="term" value="F:structural constituent of ribosome"/>
    <property type="evidence" value="ECO:0007669"/>
    <property type="project" value="InterPro"/>
</dbReference>
<dbReference type="GO" id="GO:0002181">
    <property type="term" value="P:cytoplasmic translation"/>
    <property type="evidence" value="ECO:0007669"/>
    <property type="project" value="TreeGrafter"/>
</dbReference>
<dbReference type="FunFam" id="3.90.930.12:FF:000001">
    <property type="entry name" value="50S ribosomal protein L6"/>
    <property type="match status" value="1"/>
</dbReference>
<dbReference type="FunFam" id="3.90.930.12:FF:000002">
    <property type="entry name" value="50S ribosomal protein L6"/>
    <property type="match status" value="1"/>
</dbReference>
<dbReference type="Gene3D" id="3.90.930.12">
    <property type="entry name" value="Ribosomal protein L6, alpha-beta domain"/>
    <property type="match status" value="2"/>
</dbReference>
<dbReference type="HAMAP" id="MF_01365_B">
    <property type="entry name" value="Ribosomal_uL6_B"/>
    <property type="match status" value="1"/>
</dbReference>
<dbReference type="InterPro" id="IPR000702">
    <property type="entry name" value="Ribosomal_uL6-like"/>
</dbReference>
<dbReference type="InterPro" id="IPR036789">
    <property type="entry name" value="Ribosomal_uL6-like_a/b-dom_sf"/>
</dbReference>
<dbReference type="InterPro" id="IPR020040">
    <property type="entry name" value="Ribosomal_uL6_a/b-dom"/>
</dbReference>
<dbReference type="InterPro" id="IPR019906">
    <property type="entry name" value="Ribosomal_uL6_bac-type"/>
</dbReference>
<dbReference type="InterPro" id="IPR002358">
    <property type="entry name" value="Ribosomal_uL6_CS"/>
</dbReference>
<dbReference type="NCBIfam" id="TIGR03654">
    <property type="entry name" value="L6_bact"/>
    <property type="match status" value="1"/>
</dbReference>
<dbReference type="PANTHER" id="PTHR11655">
    <property type="entry name" value="60S/50S RIBOSOMAL PROTEIN L6/L9"/>
    <property type="match status" value="1"/>
</dbReference>
<dbReference type="PANTHER" id="PTHR11655:SF14">
    <property type="entry name" value="LARGE RIBOSOMAL SUBUNIT PROTEIN UL6M"/>
    <property type="match status" value="1"/>
</dbReference>
<dbReference type="Pfam" id="PF00347">
    <property type="entry name" value="Ribosomal_L6"/>
    <property type="match status" value="2"/>
</dbReference>
<dbReference type="PIRSF" id="PIRSF002162">
    <property type="entry name" value="Ribosomal_L6"/>
    <property type="match status" value="1"/>
</dbReference>
<dbReference type="PRINTS" id="PR00059">
    <property type="entry name" value="RIBOSOMALL6"/>
</dbReference>
<dbReference type="SUPFAM" id="SSF56053">
    <property type="entry name" value="Ribosomal protein L6"/>
    <property type="match status" value="2"/>
</dbReference>
<dbReference type="PROSITE" id="PS00525">
    <property type="entry name" value="RIBOSOMAL_L6_1"/>
    <property type="match status" value="1"/>
</dbReference>
<feature type="chain" id="PRO_0000260890" description="Large ribosomal subunit protein uL6">
    <location>
        <begin position="1"/>
        <end position="177"/>
    </location>
</feature>
<protein>
    <recommendedName>
        <fullName evidence="1">Large ribosomal subunit protein uL6</fullName>
    </recommendedName>
    <alternativeName>
        <fullName evidence="2">50S ribosomal protein L6</fullName>
    </alternativeName>
</protein>
<accession>Q65QX0</accession>
<name>RL6_MANSM</name>
<reference key="1">
    <citation type="journal article" date="2004" name="Nat. Biotechnol.">
        <title>The genome sequence of the capnophilic rumen bacterium Mannheimia succiniciproducens.</title>
        <authorList>
            <person name="Hong S.H."/>
            <person name="Kim J.S."/>
            <person name="Lee S.Y."/>
            <person name="In Y.H."/>
            <person name="Choi S.S."/>
            <person name="Rih J.-K."/>
            <person name="Kim C.H."/>
            <person name="Jeong H."/>
            <person name="Hur C.G."/>
            <person name="Kim J.J."/>
        </authorList>
    </citation>
    <scope>NUCLEOTIDE SEQUENCE [LARGE SCALE GENOMIC DNA]</scope>
    <source>
        <strain>KCTC 0769BP / MBEL55E</strain>
    </source>
</reference>